<name>CAPSD_BPS13</name>
<evidence type="ECO:0000250" key="1">
    <source>
        <dbReference type="UniProtKB" id="P03641"/>
    </source>
</evidence>
<evidence type="ECO:0000305" key="2"/>
<dbReference type="EMBL" id="M14428">
    <property type="protein sequence ID" value="AAA32590.1"/>
    <property type="molecule type" value="Genomic_DNA"/>
</dbReference>
<dbReference type="PIR" id="JS0457">
    <property type="entry name" value="JS0457"/>
</dbReference>
<dbReference type="SMR" id="P07931"/>
<dbReference type="Proteomes" id="UP000002129">
    <property type="component" value="Segment"/>
</dbReference>
<dbReference type="GO" id="GO:0039615">
    <property type="term" value="C:T=1 icosahedral viral capsid"/>
    <property type="evidence" value="ECO:0007669"/>
    <property type="project" value="UniProtKB-KW"/>
</dbReference>
<dbReference type="GO" id="GO:0005198">
    <property type="term" value="F:structural molecule activity"/>
    <property type="evidence" value="ECO:0007669"/>
    <property type="project" value="InterPro"/>
</dbReference>
<dbReference type="GO" id="GO:0046718">
    <property type="term" value="P:symbiont entry into host cell"/>
    <property type="evidence" value="ECO:0007669"/>
    <property type="project" value="UniProtKB-KW"/>
</dbReference>
<dbReference type="FunFam" id="2.60.169.10:FF:000001">
    <property type="entry name" value="Capsid protein F"/>
    <property type="match status" value="1"/>
</dbReference>
<dbReference type="Gene3D" id="2.60.169.10">
    <property type="entry name" value="Microviridae F protein"/>
    <property type="match status" value="1"/>
</dbReference>
<dbReference type="InterPro" id="IPR016184">
    <property type="entry name" value="Capsid/spike_ssDNA_virus"/>
</dbReference>
<dbReference type="InterPro" id="IPR003514">
    <property type="entry name" value="Microviridae_protein_F"/>
</dbReference>
<dbReference type="InterPro" id="IPR037002">
    <property type="entry name" value="Microviridae_protein_F_sf"/>
</dbReference>
<dbReference type="Pfam" id="PF02305">
    <property type="entry name" value="Phage_F"/>
    <property type="match status" value="1"/>
</dbReference>
<dbReference type="SUPFAM" id="SSF88645">
    <property type="entry name" value="ssDNA viruses"/>
    <property type="match status" value="1"/>
</dbReference>
<keyword id="KW-0167">Capsid protein</keyword>
<keyword id="KW-1185">Reference proteome</keyword>
<keyword id="KW-1140">T=1 icosahedral capsid protein</keyword>
<keyword id="KW-1171">Viral genome ejection through host cell envelope</keyword>
<keyword id="KW-1162">Viral penetration into host cytoplasm</keyword>
<keyword id="KW-0946">Virion</keyword>
<keyword id="KW-1160">Virus entry into host cell</keyword>
<reference key="1">
    <citation type="journal article" date="1985" name="Gene">
        <title>Nucleotide sequence and genome organization of bacteriophage S13 DNA.</title>
        <authorList>
            <person name="Lau P.C.K."/>
            <person name="Spencer J.H."/>
        </authorList>
    </citation>
    <scope>NUCLEOTIDE SEQUENCE [GENOMIC DNA]</scope>
</reference>
<sequence>MSNVQTGAERMPHDLSHLGFLAGQIGRLITISTTPVIAGDSFEMDAVGALRLSPLRRGLAIDSTVDIFTFYVPHRHVYGERWIKFMKDGVNATPLPTVNTTSYIDHAAFLGTINPDTNKIPKHLFQGYLNIYNNYFKAPWMPDRTEANPNELNEDDARYGFRCCHLKNIWTAPLPPETELSRRMTTSTTSIDIMGLQAAYANLHTDQERDYFMQRYRDVISSFGGKTSYDADNRPLLVMRSNFWASGYDVDGTDQTSLGQFSGRVQQTYKHSVPRFFVPEHGTMFTLALVRFPPTATKEIQYLNAKGALTYTDIAGDPALYGNLPPREISMKDVFRSGDSSKKFKIAEGQWYRYAPSYVSPVYHLLEGFPFIQEPPSGDLQERVLIRHHDYDHCFQSVQLLQWNSQVKFNVTVYRNLPTTRDSIMTS</sequence>
<comment type="function">
    <text evidence="1">Assembles to form an icosahedral capsid with a T=1 symmetry, about 30 nm in diameter, and consisting of 60 capsid proteins F. Upon virus binding to host cell, one of the spikes dissociates from the capsid and the virus interacts with LPS through the exposed EF loops on the F proteins. After the genome had been ejected, the channel formed by the F proteins at the unique fivefold axis remains open.</text>
</comment>
<comment type="subunit">
    <text evidence="1">Pentamerizes and interacts with H protein, G and B pentamers to form 12S pre-assembly complex. By binding with protein D, induces joining of twelve 12S complex to form the procapsid. The procapsid has an external scaffold made of 240 copies of protein D, 60 copies of the internally located B protein, and contains 60 copies of each of the viral structural proteins F and G. Upon genome packaging, interacts with protein J. The mature virion is composed of 60 copies each of the F, G, and J proteins, and 12 copies of the H protein.</text>
</comment>
<comment type="subcellular location">
    <subcellularLocation>
        <location evidence="1">Virion</location>
    </subcellularLocation>
</comment>
<comment type="similarity">
    <text evidence="2">Belongs to the microviridae F protein family.</text>
</comment>
<organismHost>
    <name type="scientific">Salmonella</name>
    <dbReference type="NCBI Taxonomy" id="590"/>
</organismHost>
<organism>
    <name type="scientific">Enterobacteria phage S13</name>
    <name type="common">Bacteriophage S13</name>
    <dbReference type="NCBI Taxonomy" id="10844"/>
    <lineage>
        <taxon>Viruses</taxon>
        <taxon>Monodnaviria</taxon>
        <taxon>Sangervirae</taxon>
        <taxon>Phixviricota</taxon>
        <taxon>Malgrandaviricetes</taxon>
        <taxon>Petitvirales</taxon>
        <taxon>Microviridae</taxon>
        <taxon>Bullavirinae</taxon>
        <taxon>Sinsheimervirus</taxon>
        <taxon>Escherichia phage phiX174</taxon>
        <taxon>Escherichia phage phiX174</taxon>
    </lineage>
</organism>
<gene>
    <name type="primary">F</name>
</gene>
<proteinExistence type="inferred from homology"/>
<protein>
    <recommendedName>
        <fullName>Capsid protein F</fullName>
    </recommendedName>
    <alternativeName>
        <fullName>F protein</fullName>
    </alternativeName>
    <alternativeName>
        <fullName>GPF</fullName>
    </alternativeName>
</protein>
<accession>P07931</accession>
<feature type="initiator methionine" description="Removed; by host" evidence="1">
    <location>
        <position position="1"/>
    </location>
</feature>
<feature type="chain" id="PRO_0000164891" description="Capsid protein F">
    <location>
        <begin position="2"/>
        <end position="427"/>
    </location>
</feature>